<accession>Q08824</accession>
<feature type="chain" id="PRO_0000211323" description="Poly [ADP-ribose] polymerase 1">
    <location>
        <begin position="1" status="less than"/>
        <end position="135" status="greater than"/>
    </location>
</feature>
<feature type="domain" description="PARP alpha-helical" evidence="6">
    <location>
        <begin position="1" status="less than"/>
        <end position="21"/>
    </location>
</feature>
<feature type="domain" description="PARP catalytic" evidence="5">
    <location>
        <begin position="30"/>
        <end position="135" status="greater than"/>
    </location>
</feature>
<feature type="active site" evidence="4">
    <location>
        <position position="135"/>
    </location>
</feature>
<feature type="binding site" evidence="4">
    <location>
        <begin position="104"/>
        <end position="106"/>
    </location>
    <ligand>
        <name>NAD(+)</name>
        <dbReference type="ChEBI" id="CHEBI:57540"/>
    </ligand>
</feature>
<feature type="binding site" evidence="4">
    <location>
        <position position="113"/>
    </location>
    <ligand>
        <name>NAD(+)</name>
        <dbReference type="ChEBI" id="CHEBI:57540"/>
    </ligand>
</feature>
<feature type="binding site" evidence="4">
    <location>
        <position position="120"/>
    </location>
    <ligand>
        <name>NAD(+)</name>
        <dbReference type="ChEBI" id="CHEBI:57540"/>
    </ligand>
</feature>
<feature type="non-terminal residue">
    <location>
        <position position="1"/>
    </location>
</feature>
<feature type="non-terminal residue">
    <location>
        <position position="135"/>
    </location>
</feature>
<organism>
    <name type="scientific">Oncorhynchus masou</name>
    <name type="common">Cherry salmon</name>
    <name type="synonym">Masu salmon</name>
    <dbReference type="NCBI Taxonomy" id="8020"/>
    <lineage>
        <taxon>Eukaryota</taxon>
        <taxon>Metazoa</taxon>
        <taxon>Chordata</taxon>
        <taxon>Craniata</taxon>
        <taxon>Vertebrata</taxon>
        <taxon>Euteleostomi</taxon>
        <taxon>Actinopterygii</taxon>
        <taxon>Neopterygii</taxon>
        <taxon>Teleostei</taxon>
        <taxon>Protacanthopterygii</taxon>
        <taxon>Salmoniformes</taxon>
        <taxon>Salmonidae</taxon>
        <taxon>Salmoninae</taxon>
        <taxon>Oncorhynchus</taxon>
    </lineage>
</organism>
<proteinExistence type="evidence at transcript level"/>
<dbReference type="EC" id="2.4.2.30" evidence="1"/>
<dbReference type="EC" id="2.4.2.-" evidence="1"/>
<dbReference type="EMBL" id="D13809">
    <property type="protein sequence ID" value="BAA02965.1"/>
    <property type="molecule type" value="mRNA"/>
</dbReference>
<dbReference type="PIR" id="PN0494">
    <property type="entry name" value="PN0494"/>
</dbReference>
<dbReference type="SMR" id="Q08824"/>
<dbReference type="GO" id="GO:0000785">
    <property type="term" value="C:chromatin"/>
    <property type="evidence" value="ECO:0000250"/>
    <property type="project" value="UniProtKB"/>
</dbReference>
<dbReference type="GO" id="GO:0005829">
    <property type="term" value="C:cytosol"/>
    <property type="evidence" value="ECO:0000250"/>
    <property type="project" value="UniProtKB"/>
</dbReference>
<dbReference type="GO" id="GO:0043596">
    <property type="term" value="C:nuclear replication fork"/>
    <property type="evidence" value="ECO:0000250"/>
    <property type="project" value="UniProtKB"/>
</dbReference>
<dbReference type="GO" id="GO:0005730">
    <property type="term" value="C:nucleolus"/>
    <property type="evidence" value="ECO:0007669"/>
    <property type="project" value="UniProtKB-SubCell"/>
</dbReference>
<dbReference type="GO" id="GO:0035861">
    <property type="term" value="C:site of double-strand break"/>
    <property type="evidence" value="ECO:0000250"/>
    <property type="project" value="UniProtKB"/>
</dbReference>
<dbReference type="GO" id="GO:0003684">
    <property type="term" value="F:damaged DNA binding"/>
    <property type="evidence" value="ECO:0000250"/>
    <property type="project" value="UniProtKB"/>
</dbReference>
<dbReference type="GO" id="GO:0003950">
    <property type="term" value="F:NAD+ poly-ADP-ribosyltransferase activity"/>
    <property type="evidence" value="ECO:0000250"/>
    <property type="project" value="UniProtKB"/>
</dbReference>
<dbReference type="GO" id="GO:1990404">
    <property type="term" value="F:NAD+-protein mono-ADP-ribosyltransferase activity"/>
    <property type="evidence" value="ECO:0000250"/>
    <property type="project" value="UniProtKB"/>
</dbReference>
<dbReference type="GO" id="GO:0140806">
    <property type="term" value="F:NAD+-protein-aspartate ADP-ribosyltransferase activity"/>
    <property type="evidence" value="ECO:0000250"/>
    <property type="project" value="UniProtKB"/>
</dbReference>
<dbReference type="GO" id="GO:0140807">
    <property type="term" value="F:NAD+-protein-glutamate ADP-ribosyltransferase activity"/>
    <property type="evidence" value="ECO:0000250"/>
    <property type="project" value="UniProtKB"/>
</dbReference>
<dbReference type="GO" id="GO:0140815">
    <property type="term" value="F:NAD+-protein-histidine ADP-ribosyltransferase activity"/>
    <property type="evidence" value="ECO:0000250"/>
    <property type="project" value="UniProtKB"/>
</dbReference>
<dbReference type="GO" id="GO:0140805">
    <property type="term" value="F:NAD+-protein-serine ADP-ribosyltransferase activity"/>
    <property type="evidence" value="ECO:0000250"/>
    <property type="project" value="UniProtKB"/>
</dbReference>
<dbReference type="GO" id="GO:0140808">
    <property type="term" value="F:NAD+-protein-tyrosine ADP-ribosyltransferase activity"/>
    <property type="evidence" value="ECO:0000250"/>
    <property type="project" value="UniProtKB"/>
</dbReference>
<dbReference type="GO" id="GO:0031491">
    <property type="term" value="F:nucleosome binding"/>
    <property type="evidence" value="ECO:0000250"/>
    <property type="project" value="UniProtKB"/>
</dbReference>
<dbReference type="GO" id="GO:0016779">
    <property type="term" value="F:nucleotidyltransferase activity"/>
    <property type="evidence" value="ECO:0007669"/>
    <property type="project" value="UniProtKB-KW"/>
</dbReference>
<dbReference type="GO" id="GO:0042803">
    <property type="term" value="F:protein homodimerization activity"/>
    <property type="evidence" value="ECO:0000250"/>
    <property type="project" value="UniProtKB"/>
</dbReference>
<dbReference type="GO" id="GO:0008270">
    <property type="term" value="F:zinc ion binding"/>
    <property type="evidence" value="ECO:0000250"/>
    <property type="project" value="UniProtKB"/>
</dbReference>
<dbReference type="GO" id="GO:1990966">
    <property type="term" value="P:ATP generation from poly-ADP-D-ribose"/>
    <property type="evidence" value="ECO:0000250"/>
    <property type="project" value="UniProtKB"/>
</dbReference>
<dbReference type="GO" id="GO:0030592">
    <property type="term" value="P:DNA ADP-ribosylation"/>
    <property type="evidence" value="ECO:0000250"/>
    <property type="project" value="UniProtKB"/>
</dbReference>
<dbReference type="GO" id="GO:0006302">
    <property type="term" value="P:double-strand break repair"/>
    <property type="evidence" value="ECO:0007669"/>
    <property type="project" value="TreeGrafter"/>
</dbReference>
<dbReference type="GO" id="GO:0045087">
    <property type="term" value="P:innate immune response"/>
    <property type="evidence" value="ECO:0007669"/>
    <property type="project" value="UniProtKB-KW"/>
</dbReference>
<dbReference type="GO" id="GO:0045824">
    <property type="term" value="P:negative regulation of innate immune response"/>
    <property type="evidence" value="ECO:0000250"/>
    <property type="project" value="UniProtKB"/>
</dbReference>
<dbReference type="GO" id="GO:0000122">
    <property type="term" value="P:negative regulation of transcription by RNA polymerase II"/>
    <property type="evidence" value="ECO:0000250"/>
    <property type="project" value="UniProtKB"/>
</dbReference>
<dbReference type="GO" id="GO:1905168">
    <property type="term" value="P:positive regulation of double-strand break repair via homologous recombination"/>
    <property type="evidence" value="ECO:0000250"/>
    <property type="project" value="UniProtKB"/>
</dbReference>
<dbReference type="GO" id="GO:0070213">
    <property type="term" value="P:protein auto-ADP-ribosylation"/>
    <property type="evidence" value="ECO:0000250"/>
    <property type="project" value="UniProtKB"/>
</dbReference>
<dbReference type="GO" id="GO:0070212">
    <property type="term" value="P:protein poly-ADP-ribosylation"/>
    <property type="evidence" value="ECO:0000250"/>
    <property type="project" value="UniProtKB"/>
</dbReference>
<dbReference type="GO" id="GO:0071932">
    <property type="term" value="P:replication fork reversal"/>
    <property type="evidence" value="ECO:0000250"/>
    <property type="project" value="UniProtKB"/>
</dbReference>
<dbReference type="Gene3D" id="3.90.228.10">
    <property type="match status" value="1"/>
</dbReference>
<dbReference type="Gene3D" id="1.20.142.10">
    <property type="entry name" value="Poly(ADP-ribose) polymerase, regulatory domain"/>
    <property type="match status" value="1"/>
</dbReference>
<dbReference type="InterPro" id="IPR050800">
    <property type="entry name" value="ARTD/PARP"/>
</dbReference>
<dbReference type="InterPro" id="IPR012317">
    <property type="entry name" value="Poly(ADP-ribose)pol_cat_dom"/>
</dbReference>
<dbReference type="InterPro" id="IPR004102">
    <property type="entry name" value="Poly(ADP-ribose)pol_reg_dom"/>
</dbReference>
<dbReference type="InterPro" id="IPR036616">
    <property type="entry name" value="Poly(ADP-ribose)pol_reg_dom_sf"/>
</dbReference>
<dbReference type="PANTHER" id="PTHR10459">
    <property type="entry name" value="DNA LIGASE"/>
    <property type="match status" value="1"/>
</dbReference>
<dbReference type="PANTHER" id="PTHR10459:SF112">
    <property type="entry name" value="POLY [ADP-RIBOSE] POLYMERASE 1"/>
    <property type="match status" value="1"/>
</dbReference>
<dbReference type="Pfam" id="PF00644">
    <property type="entry name" value="PARP"/>
    <property type="match status" value="1"/>
</dbReference>
<dbReference type="SUPFAM" id="SSF56399">
    <property type="entry name" value="ADP-ribosylation"/>
    <property type="match status" value="1"/>
</dbReference>
<dbReference type="SUPFAM" id="SSF47587">
    <property type="entry name" value="Domain of poly(ADP-ribose) polymerase"/>
    <property type="match status" value="1"/>
</dbReference>
<dbReference type="PROSITE" id="PS51060">
    <property type="entry name" value="PARP_ALPHA_HD"/>
    <property type="match status" value="1"/>
</dbReference>
<dbReference type="PROSITE" id="PS51059">
    <property type="entry name" value="PARP_CATALYTIC"/>
    <property type="match status" value="1"/>
</dbReference>
<keyword id="KW-0013">ADP-ribosylation</keyword>
<keyword id="KW-0021">Allosteric enzyme</keyword>
<keyword id="KW-0158">Chromosome</keyword>
<keyword id="KW-0963">Cytoplasm</keyword>
<keyword id="KW-0227">DNA damage</keyword>
<keyword id="KW-0234">DNA repair</keyword>
<keyword id="KW-0238">DNA-binding</keyword>
<keyword id="KW-0328">Glycosyltransferase</keyword>
<keyword id="KW-0391">Immunity</keyword>
<keyword id="KW-0399">Innate immunity</keyword>
<keyword id="KW-1017">Isopeptide bond</keyword>
<keyword id="KW-0520">NAD</keyword>
<keyword id="KW-0548">Nucleotidyltransferase</keyword>
<keyword id="KW-0539">Nucleus</keyword>
<keyword id="KW-0677">Repeat</keyword>
<keyword id="KW-0804">Transcription</keyword>
<keyword id="KW-0805">Transcription regulation</keyword>
<keyword id="KW-0808">Transferase</keyword>
<evidence type="ECO:0000250" key="1">
    <source>
        <dbReference type="UniProtKB" id="P09874"/>
    </source>
</evidence>
<evidence type="ECO:0000250" key="2">
    <source>
        <dbReference type="UniProtKB" id="P11103"/>
    </source>
</evidence>
<evidence type="ECO:0000250" key="3">
    <source>
        <dbReference type="UniProtKB" id="Q5RHR0"/>
    </source>
</evidence>
<evidence type="ECO:0000250" key="4">
    <source>
        <dbReference type="UniProtKB" id="Q9UGN5"/>
    </source>
</evidence>
<evidence type="ECO:0000255" key="5">
    <source>
        <dbReference type="PROSITE-ProRule" id="PRU00397"/>
    </source>
</evidence>
<evidence type="ECO:0000255" key="6">
    <source>
        <dbReference type="PROSITE-ProRule" id="PRU00398"/>
    </source>
</evidence>
<evidence type="ECO:0000305" key="7"/>
<reference key="1">
    <citation type="journal article" date="1993" name="Biochem. Biophys. Res. Commun.">
        <title>Isolation of cDNAs encoding the catalytic domain of poly(ADP-ribose) polymerase from Xenopus laevis and cherry salmon using heterologous oligonucleotide consensus sequences.</title>
        <authorList>
            <person name="Ozawa Y."/>
            <person name="Uchida K."/>
            <person name="Uchida M."/>
            <person name="Ami Y."/>
            <person name="Kushida S."/>
            <person name="Okada N."/>
            <person name="Miwa M."/>
        </authorList>
    </citation>
    <scope>NUCLEOTIDE SEQUENCE [MRNA]</scope>
</reference>
<gene>
    <name type="primary">parp1</name>
    <name type="synonym">adprt</name>
</gene>
<name>PARP1_ONCMA</name>
<sequence length="135" mass="15411">QAKVEMLDNLLDIEVAYSLLKGGAEDNKKDPIDINYEKLKTKIEVVDKTTKEAEIILQYVKNTHAATHNTYTLVVEEIFKIVREGEYQKYRPFQDLPNRQLLWHGSRATNYAGILSQGLRIAPPEAPVTGYMFGK</sequence>
<protein>
    <recommendedName>
        <fullName>Poly [ADP-ribose] polymerase 1</fullName>
        <shortName>PARP-1</shortName>
        <ecNumber evidence="1">2.4.2.30</ecNumber>
    </recommendedName>
    <alternativeName>
        <fullName>ADP-ribosyltransferase diphtheria toxin-like 1</fullName>
        <shortName>ARTD1</shortName>
    </alternativeName>
    <alternativeName>
        <fullName evidence="1">DNA ADP-ribosyltransferase PARP1</fullName>
        <ecNumber evidence="1">2.4.2.-</ecNumber>
    </alternativeName>
    <alternativeName>
        <fullName>NAD(+) ADP-ribosyltransferase 1</fullName>
        <shortName>ADPRT 1</shortName>
    </alternativeName>
    <alternativeName>
        <fullName>Poly[ADP-ribose] synthase 1</fullName>
    </alternativeName>
    <alternativeName>
        <fullName evidence="1">Protein poly-ADP-ribosyltransferase PARP1</fullName>
        <ecNumber evidence="1">2.4.2.-</ecNumber>
    </alternativeName>
</protein>
<comment type="function">
    <text evidence="1 2 3">Poly-ADP-ribosyltransferase that mediates poly-ADP-ribosylation of proteins and plays a key role in DNA repair (By similarity). Mediates glutamate, aspartate, serine, histidine or tyrosine ADP-ribosylation of proteins: the ADP-D-ribosyl group of NAD(+) is transferred to the acceptor carboxyl group of target residues and further ADP-ribosyl groups are transferred to the 2'-position of the terminal adenosine moiety, building up a polymer with an average chain length of 20-30 units. Serine ADP-ribosylation of proteins constitutes the primary form of ADP-ribosylation of proteins in response to DNA damage (By similarity). Specificity for the different amino acids is conferred by interacting factors, such as hpf1 and nmnat1 (By similarity). Following interaction with hpf1, catalyzes serine ADP-ribosylation of target proteins; hpf1 confers serine specificity by completing the parp1 active site. Also catalyzes tyrosine ADP-ribosylation of target proteins following interaction with hpf1 (By similarity). Following interaction with nmnat1, catalyzes glutamate and aspartate ADP-ribosylation of target proteins; nmnat1 confers glutamate and aspartate specificity (By similarity). Parp1 initiates the repair of DNA breaks: recognizes and binds DNA breaks within chromatin and recruits hpf1, licensing serine ADP-ribosylation of target proteins, such as histones (H2BS6ADPr and H3S10ADPr), thereby promoting decompaction of chromatin and the recruitment of repair factors leading to the reparation of DNA strand breaks. In addition to base excision repair (BER) pathway, also involved in double-strand breaks (DSBs) repair. Mediates the poly-ADP-ribosylation of a number of proteins. In addition to proteins, also able to ADP-ribosylate DNA: catalyzes ADP-ribosylation of DNA strand break termini containing terminal phosphates and a 2'-OH group in single- and double-stranded DNA, respectively (By similarity). Parp1-mediated DNA repair in neurons plays a role in sleep: senses DNA damage in neurons and promotes sleep, facilitating efficient DNA repair (By similarity). In addition to DNA repair, also involved in other processes, such as transcription regulation, programmed cell death, membrane repair, adipogenesis and innate immunity (By similarity). Acts as a repressor of transcription: binds to nucleosomes and modulates chromatin structure in a manner similar to histone H1, thereby altering RNA polymerase II. Acts both as a positive and negative regulator of transcription elongation, depending on the context (By similarity). Poly-ADP-ribose chains generated by parp1 also play a role in poly-ADP-ribose-dependent cell death, a process named parthanatos. Also acts as a negative regulator of the cGAS-STING pathway by mediating poly-ADP-ribosylation and inactivation of cgas. Acts as a negative regulator of adipogenesis by catalyzing poly ADP-ribosylation of histone H2B on 'Glu-35' (H2BE35ADPr) (By similarity).</text>
</comment>
<comment type="catalytic activity">
    <reaction evidence="1">
        <text>NAD(+) + (ADP-D-ribosyl)n-acceptor = nicotinamide + (ADP-D-ribosyl)n+1-acceptor + H(+).</text>
        <dbReference type="EC" id="2.4.2.30"/>
    </reaction>
</comment>
<comment type="catalytic activity">
    <reaction evidence="1">
        <text>L-seryl-[protein] + NAD(+) = O-(ADP-D-ribosyl)-L-seryl-[protein] + nicotinamide + H(+)</text>
        <dbReference type="Rhea" id="RHEA:58232"/>
        <dbReference type="Rhea" id="RHEA-COMP:9863"/>
        <dbReference type="Rhea" id="RHEA-COMP:15091"/>
        <dbReference type="ChEBI" id="CHEBI:15378"/>
        <dbReference type="ChEBI" id="CHEBI:17154"/>
        <dbReference type="ChEBI" id="CHEBI:29999"/>
        <dbReference type="ChEBI" id="CHEBI:57540"/>
        <dbReference type="ChEBI" id="CHEBI:142556"/>
    </reaction>
    <physiologicalReaction direction="left-to-right" evidence="1">
        <dbReference type="Rhea" id="RHEA:58233"/>
    </physiologicalReaction>
</comment>
<comment type="catalytic activity">
    <reaction evidence="2">
        <text>L-aspartyl-[protein] + NAD(+) = 4-O-(ADP-D-ribosyl)-L-aspartyl-[protein] + nicotinamide</text>
        <dbReference type="Rhea" id="RHEA:54424"/>
        <dbReference type="Rhea" id="RHEA-COMP:9867"/>
        <dbReference type="Rhea" id="RHEA-COMP:13832"/>
        <dbReference type="ChEBI" id="CHEBI:17154"/>
        <dbReference type="ChEBI" id="CHEBI:29961"/>
        <dbReference type="ChEBI" id="CHEBI:57540"/>
        <dbReference type="ChEBI" id="CHEBI:138102"/>
    </reaction>
    <physiologicalReaction direction="left-to-right" evidence="2">
        <dbReference type="Rhea" id="RHEA:54425"/>
    </physiologicalReaction>
</comment>
<comment type="catalytic activity">
    <reaction evidence="2">
        <text>L-glutamyl-[protein] + NAD(+) = 5-O-(ADP-D-ribosyl)-L-glutamyl-[protein] + nicotinamide</text>
        <dbReference type="Rhea" id="RHEA:58224"/>
        <dbReference type="Rhea" id="RHEA-COMP:10208"/>
        <dbReference type="Rhea" id="RHEA-COMP:15089"/>
        <dbReference type="ChEBI" id="CHEBI:17154"/>
        <dbReference type="ChEBI" id="CHEBI:29973"/>
        <dbReference type="ChEBI" id="CHEBI:57540"/>
        <dbReference type="ChEBI" id="CHEBI:142540"/>
    </reaction>
    <physiologicalReaction direction="left-to-right" evidence="2">
        <dbReference type="Rhea" id="RHEA:58225"/>
    </physiologicalReaction>
</comment>
<comment type="catalytic activity">
    <reaction evidence="1">
        <text>L-tyrosyl-[protein] + NAD(+) = O-(ADP-D-ribosyl)-L-tyrosyl-[protein] + nicotinamide + H(+)</text>
        <dbReference type="Rhea" id="RHEA:58236"/>
        <dbReference type="Rhea" id="RHEA-COMP:10136"/>
        <dbReference type="Rhea" id="RHEA-COMP:15092"/>
        <dbReference type="ChEBI" id="CHEBI:15378"/>
        <dbReference type="ChEBI" id="CHEBI:17154"/>
        <dbReference type="ChEBI" id="CHEBI:46858"/>
        <dbReference type="ChEBI" id="CHEBI:57540"/>
        <dbReference type="ChEBI" id="CHEBI:142557"/>
    </reaction>
    <physiologicalReaction direction="left-to-right" evidence="1">
        <dbReference type="Rhea" id="RHEA:58237"/>
    </physiologicalReaction>
</comment>
<comment type="catalytic activity">
    <reaction evidence="1">
        <text>L-histidyl-[protein] + NAD(+) = N(tele)-(ADP-D-ribosyl)-L-histidyl-[protein] + nicotinamide + H(+)</text>
        <dbReference type="Rhea" id="RHEA:72071"/>
        <dbReference type="Rhea" id="RHEA-COMP:9745"/>
        <dbReference type="Rhea" id="RHEA-COMP:18085"/>
        <dbReference type="ChEBI" id="CHEBI:15378"/>
        <dbReference type="ChEBI" id="CHEBI:17154"/>
        <dbReference type="ChEBI" id="CHEBI:29979"/>
        <dbReference type="ChEBI" id="CHEBI:57540"/>
        <dbReference type="ChEBI" id="CHEBI:191398"/>
    </reaction>
    <physiologicalReaction direction="left-to-right" evidence="1">
        <dbReference type="Rhea" id="RHEA:72072"/>
    </physiologicalReaction>
</comment>
<comment type="activity regulation">
    <text evidence="1">ADP-ribosyltransferase activity is regulated via an allosteric activation mechanism. In absence of activation signal, parp1 is autoinhibited by the PARP alpha-helical domain (also named HD region), which prevents effective NAD(+)-binding. Activity is highly stimulated by signals, such as DNA strand breaks. Binding to damaged DNA unfolds the PARP alpha-helical domain, relieving autoinhibition. Poly-ADP-ribosyltransferase activity is tightly regulated and parp1 is removed from damaged chromatin following initial poly-ADP-ribosylation of chromatin to avoid prolonged residence (trapping) that has cytotoxic consequences. A number of factors or post-translational modifications (auto-poly-ADP-ribosylation) promote parp1 removal from chromatin.</text>
</comment>
<comment type="subunit">
    <text evidence="1">Homodimer; PARP-type zinc-fingers from separate parp1 molecules form a dimer module that specifically recognizes DNA strand breaks.</text>
</comment>
<comment type="subcellular location">
    <subcellularLocation>
        <location evidence="1">Chromosome</location>
    </subcellularLocation>
    <subcellularLocation>
        <location evidence="1">Nucleus</location>
    </subcellularLocation>
    <subcellularLocation>
        <location evidence="1">Nucleus</location>
        <location evidence="1">Nucleolus</location>
    </subcellularLocation>
    <subcellularLocation>
        <location evidence="1">Cytoplasm</location>
        <location evidence="1">Cytosol</location>
    </subcellularLocation>
    <text evidence="1">Localizes to sites of DNA damage. Recognizes (via PARP-type zinc-fingers) and binds DNA strand breaks. Also binds normal/undamaged chromatin. Auto poly-ADP-ribosylation promotes dissociation from chromatin.</text>
</comment>
<comment type="domain">
    <text evidence="1">The two PARP-type zinc-fingers (also named Zn1 and Zn2) specifically recognize DNA strand breaks: PARP-type zinc-finger 1 binds PARP-type zinc-finger 2 from a separate parp1 molecule to form a dimeric module that specifically recognizes DNA strand breaks.</text>
</comment>
<comment type="domain">
    <text evidence="1">The PADR1-type (also named Zn3) zinc-finger mediates an interdomain contact and is required for the ability of parp1 to regulate chromatin structure.</text>
</comment>
<comment type="domain">
    <text evidence="1">The BRCT domain is able to bind intact DNA without activating the poly-ADP-ribosyltransferase activity. The BRCT domain mediates DNA intrastrand transfer (named 'monkey-bar mechanism') that allows rapid movements of parp1 through the nucleus.</text>
</comment>
<comment type="domain">
    <text evidence="4">The WGR domain bridges two nucleosomes, with the broken DNA aligned in a position suitable for ligation. The bridging induces structural changes in parp1 that signal the recognition of a DNA break to the catalytic domain of parp1.</text>
</comment>
<comment type="domain">
    <text evidence="1">The PARP alpha-helical domain (also named HD region) prevents effective NAD(+)-binding in absence of activation signal. Binding to damaged DNA unfolds the PARP alpha-helical domain, relieving autoinhibition.</text>
</comment>
<comment type="PTM">
    <text evidence="1">Poly-ADP-ribosylated on serine, glutamate and aspartate residues by autocatalysis. Auto-ADP-ribosylation on serine takes place following interaction with HPF1. Auto poly-ADP-ribosylation on serine residues promotes its dissociation from chromatin.</text>
</comment>
<comment type="similarity">
    <text evidence="7">Belongs to the ARTD/PARP family.</text>
</comment>